<dbReference type="EMBL" id="AM933172">
    <property type="protein sequence ID" value="CAR35686.1"/>
    <property type="molecule type" value="Genomic_DNA"/>
</dbReference>
<dbReference type="RefSeq" id="WP_001122550.1">
    <property type="nucleotide sequence ID" value="NC_011294.1"/>
</dbReference>
<dbReference type="SMR" id="B5R0N7"/>
<dbReference type="KEGG" id="set:SEN4126"/>
<dbReference type="HOGENOM" id="CLU_004131_5_1_6"/>
<dbReference type="Proteomes" id="UP000000613">
    <property type="component" value="Chromosome"/>
</dbReference>
<dbReference type="GO" id="GO:0032300">
    <property type="term" value="C:mismatch repair complex"/>
    <property type="evidence" value="ECO:0007669"/>
    <property type="project" value="InterPro"/>
</dbReference>
<dbReference type="GO" id="GO:0005524">
    <property type="term" value="F:ATP binding"/>
    <property type="evidence" value="ECO:0007669"/>
    <property type="project" value="InterPro"/>
</dbReference>
<dbReference type="GO" id="GO:0016887">
    <property type="term" value="F:ATP hydrolysis activity"/>
    <property type="evidence" value="ECO:0007669"/>
    <property type="project" value="InterPro"/>
</dbReference>
<dbReference type="GO" id="GO:0140664">
    <property type="term" value="F:ATP-dependent DNA damage sensor activity"/>
    <property type="evidence" value="ECO:0007669"/>
    <property type="project" value="InterPro"/>
</dbReference>
<dbReference type="GO" id="GO:0030983">
    <property type="term" value="F:mismatched DNA binding"/>
    <property type="evidence" value="ECO:0007669"/>
    <property type="project" value="InterPro"/>
</dbReference>
<dbReference type="GO" id="GO:0006298">
    <property type="term" value="P:mismatch repair"/>
    <property type="evidence" value="ECO:0007669"/>
    <property type="project" value="UniProtKB-UniRule"/>
</dbReference>
<dbReference type="CDD" id="cd16926">
    <property type="entry name" value="HATPase_MutL-MLH-PMS-like"/>
    <property type="match status" value="1"/>
</dbReference>
<dbReference type="CDD" id="cd03482">
    <property type="entry name" value="MutL_Trans_MutL"/>
    <property type="match status" value="1"/>
</dbReference>
<dbReference type="FunFam" id="3.30.230.10:FF:000013">
    <property type="entry name" value="DNA mismatch repair endonuclease MutL"/>
    <property type="match status" value="1"/>
</dbReference>
<dbReference type="FunFam" id="3.30.565.10:FF:000003">
    <property type="entry name" value="DNA mismatch repair endonuclease MutL"/>
    <property type="match status" value="1"/>
</dbReference>
<dbReference type="FunFam" id="3.30.1370.100:FF:000002">
    <property type="entry name" value="DNA mismatch repair protein MutL"/>
    <property type="match status" value="1"/>
</dbReference>
<dbReference type="Gene3D" id="3.30.230.10">
    <property type="match status" value="1"/>
</dbReference>
<dbReference type="Gene3D" id="3.30.565.10">
    <property type="entry name" value="Histidine kinase-like ATPase, C-terminal domain"/>
    <property type="match status" value="1"/>
</dbReference>
<dbReference type="Gene3D" id="3.30.1540.20">
    <property type="entry name" value="MutL, C-terminal domain, dimerisation subdomain"/>
    <property type="match status" value="1"/>
</dbReference>
<dbReference type="Gene3D" id="3.30.1370.100">
    <property type="entry name" value="MutL, C-terminal domain, regulatory subdomain"/>
    <property type="match status" value="1"/>
</dbReference>
<dbReference type="HAMAP" id="MF_00149">
    <property type="entry name" value="DNA_mis_repair"/>
    <property type="match status" value="1"/>
</dbReference>
<dbReference type="InterPro" id="IPR014762">
    <property type="entry name" value="DNA_mismatch_repair_CS"/>
</dbReference>
<dbReference type="InterPro" id="IPR020667">
    <property type="entry name" value="DNA_mismatch_repair_MutL"/>
</dbReference>
<dbReference type="InterPro" id="IPR013507">
    <property type="entry name" value="DNA_mismatch_S5_2-like"/>
</dbReference>
<dbReference type="InterPro" id="IPR036890">
    <property type="entry name" value="HATPase_C_sf"/>
</dbReference>
<dbReference type="InterPro" id="IPR002099">
    <property type="entry name" value="MutL/Mlh/PMS"/>
</dbReference>
<dbReference type="InterPro" id="IPR038973">
    <property type="entry name" value="MutL/Mlh/Pms-like"/>
</dbReference>
<dbReference type="InterPro" id="IPR014790">
    <property type="entry name" value="MutL_C"/>
</dbReference>
<dbReference type="InterPro" id="IPR042120">
    <property type="entry name" value="MutL_C_dimsub"/>
</dbReference>
<dbReference type="InterPro" id="IPR042121">
    <property type="entry name" value="MutL_C_regsub"/>
</dbReference>
<dbReference type="InterPro" id="IPR037198">
    <property type="entry name" value="MutL_C_sf"/>
</dbReference>
<dbReference type="InterPro" id="IPR020568">
    <property type="entry name" value="Ribosomal_Su5_D2-typ_SF"/>
</dbReference>
<dbReference type="InterPro" id="IPR014721">
    <property type="entry name" value="Ribsml_uS5_D2-typ_fold_subgr"/>
</dbReference>
<dbReference type="NCBIfam" id="TIGR00585">
    <property type="entry name" value="mutl"/>
    <property type="match status" value="1"/>
</dbReference>
<dbReference type="NCBIfam" id="NF000948">
    <property type="entry name" value="PRK00095.1-1"/>
    <property type="match status" value="1"/>
</dbReference>
<dbReference type="PANTHER" id="PTHR10073">
    <property type="entry name" value="DNA MISMATCH REPAIR PROTEIN MLH, PMS, MUTL"/>
    <property type="match status" value="1"/>
</dbReference>
<dbReference type="PANTHER" id="PTHR10073:SF12">
    <property type="entry name" value="DNA MISMATCH REPAIR PROTEIN MLH1"/>
    <property type="match status" value="1"/>
</dbReference>
<dbReference type="Pfam" id="PF01119">
    <property type="entry name" value="DNA_mis_repair"/>
    <property type="match status" value="1"/>
</dbReference>
<dbReference type="Pfam" id="PF13589">
    <property type="entry name" value="HATPase_c_3"/>
    <property type="match status" value="1"/>
</dbReference>
<dbReference type="Pfam" id="PF08676">
    <property type="entry name" value="MutL_C"/>
    <property type="match status" value="1"/>
</dbReference>
<dbReference type="SMART" id="SM01340">
    <property type="entry name" value="DNA_mis_repair"/>
    <property type="match status" value="1"/>
</dbReference>
<dbReference type="SMART" id="SM00853">
    <property type="entry name" value="MutL_C"/>
    <property type="match status" value="1"/>
</dbReference>
<dbReference type="SUPFAM" id="SSF55874">
    <property type="entry name" value="ATPase domain of HSP90 chaperone/DNA topoisomerase II/histidine kinase"/>
    <property type="match status" value="1"/>
</dbReference>
<dbReference type="SUPFAM" id="SSF118116">
    <property type="entry name" value="DNA mismatch repair protein MutL"/>
    <property type="match status" value="1"/>
</dbReference>
<dbReference type="SUPFAM" id="SSF54211">
    <property type="entry name" value="Ribosomal protein S5 domain 2-like"/>
    <property type="match status" value="1"/>
</dbReference>
<dbReference type="PROSITE" id="PS00058">
    <property type="entry name" value="DNA_MISMATCH_REPAIR_1"/>
    <property type="match status" value="1"/>
</dbReference>
<gene>
    <name evidence="1" type="primary">mutL</name>
    <name type="ordered locus">SEN4126</name>
</gene>
<accession>B5R0N7</accession>
<protein>
    <recommendedName>
        <fullName evidence="1">DNA mismatch repair protein MutL</fullName>
    </recommendedName>
</protein>
<organism>
    <name type="scientific">Salmonella enteritidis PT4 (strain P125109)</name>
    <dbReference type="NCBI Taxonomy" id="550537"/>
    <lineage>
        <taxon>Bacteria</taxon>
        <taxon>Pseudomonadati</taxon>
        <taxon>Pseudomonadota</taxon>
        <taxon>Gammaproteobacteria</taxon>
        <taxon>Enterobacterales</taxon>
        <taxon>Enterobacteriaceae</taxon>
        <taxon>Salmonella</taxon>
    </lineage>
</organism>
<name>MUTL_SALEP</name>
<keyword id="KW-0227">DNA damage</keyword>
<keyword id="KW-0234">DNA repair</keyword>
<evidence type="ECO:0000255" key="1">
    <source>
        <dbReference type="HAMAP-Rule" id="MF_00149"/>
    </source>
</evidence>
<evidence type="ECO:0000256" key="2">
    <source>
        <dbReference type="SAM" id="MobiDB-lite"/>
    </source>
</evidence>
<feature type="chain" id="PRO_1000096681" description="DNA mismatch repair protein MutL">
    <location>
        <begin position="1"/>
        <end position="618"/>
    </location>
</feature>
<feature type="region of interest" description="Disordered" evidence="2">
    <location>
        <begin position="367"/>
        <end position="402"/>
    </location>
</feature>
<feature type="compositionally biased region" description="Low complexity" evidence="2">
    <location>
        <begin position="367"/>
        <end position="381"/>
    </location>
</feature>
<feature type="compositionally biased region" description="Gly residues" evidence="2">
    <location>
        <begin position="382"/>
        <end position="392"/>
    </location>
</feature>
<proteinExistence type="inferred from homology"/>
<comment type="function">
    <text evidence="1">This protein is involved in the repair of mismatches in DNA. It is required for dam-dependent methyl-directed DNA mismatch repair. May act as a 'molecular matchmaker', a protein that promotes the formation of a stable complex between two or more DNA-binding proteins in an ATP-dependent manner without itself being part of a final effector complex.</text>
</comment>
<comment type="similarity">
    <text evidence="1">Belongs to the DNA mismatch repair MutL/HexB family.</text>
</comment>
<reference key="1">
    <citation type="journal article" date="2008" name="Genome Res.">
        <title>Comparative genome analysis of Salmonella enteritidis PT4 and Salmonella gallinarum 287/91 provides insights into evolutionary and host adaptation pathways.</title>
        <authorList>
            <person name="Thomson N.R."/>
            <person name="Clayton D.J."/>
            <person name="Windhorst D."/>
            <person name="Vernikos G."/>
            <person name="Davidson S."/>
            <person name="Churcher C."/>
            <person name="Quail M.A."/>
            <person name="Stevens M."/>
            <person name="Jones M.A."/>
            <person name="Watson M."/>
            <person name="Barron A."/>
            <person name="Layton A."/>
            <person name="Pickard D."/>
            <person name="Kingsley R.A."/>
            <person name="Bignell A."/>
            <person name="Clark L."/>
            <person name="Harris B."/>
            <person name="Ormond D."/>
            <person name="Abdellah Z."/>
            <person name="Brooks K."/>
            <person name="Cherevach I."/>
            <person name="Chillingworth T."/>
            <person name="Woodward J."/>
            <person name="Norberczak H."/>
            <person name="Lord A."/>
            <person name="Arrowsmith C."/>
            <person name="Jagels K."/>
            <person name="Moule S."/>
            <person name="Mungall K."/>
            <person name="Saunders M."/>
            <person name="Whitehead S."/>
            <person name="Chabalgoity J.A."/>
            <person name="Maskell D."/>
            <person name="Humphreys T."/>
            <person name="Roberts M."/>
            <person name="Barrow P.A."/>
            <person name="Dougan G."/>
            <person name="Parkhill J."/>
        </authorList>
    </citation>
    <scope>NUCLEOTIDE SEQUENCE [LARGE SCALE GENOMIC DNA]</scope>
    <source>
        <strain>P125109</strain>
    </source>
</reference>
<sequence length="618" mass="67711">MPIQVLPPQLANQIAAGEVVERPASVVKELVENSLDAGATRVDIDIERGGAKLIRIRDNGCGIKKEELALALARHATSKIASLDDLEAIISLGFRGEALASISSVSRLTLTSRTAEQAEAWQAYAEGRDMDVTVKPAAHPVGTTLEVLDLFYNTPARRKFMRTEKTEFNHIDEIIRRIALARFDVTLNLSHNGKLVRQYRAVAKDGQKERRLGAICGTPFLEQALAIEWQHGDLTLRGWVADPNHTTTALTEIQYCYVNGRMMRDRLINHAIRQACEDKLGADQQPAFVLYLEIDPHQVDVNVHPAKHEVRFHQSRLVHDFIYQGVLSVLQQQTETTLPLEEIAPAPRHVPENRIAAGRNHFAVPAEPTAAREPATPRYSGGASGGNGGRQSAGGWPHAQPGYQKQQGEVYRALLQTPATSPAPEPVAPALDGHSQSFGRVLTIVGGDCALLEHAGTIQLLSLPVAERWLRQAQLTPGQSPVCAQPLLIPLRLKVSADEKAALQKAQSLLGELGIEFQSDAQHVTIRAVPLPLRQQNLQILIPELIGYLAQQTTFATVNIAQWIARNVQSEHPQWSMAQAISLLADVERLCPQLVKAPPGGLLQPVDLHSAMNALKHE</sequence>